<accession>C9X8K0</accession>
<sequence>MKISSGAINFSTIPNQVKKLITSIREHTKNGLTSKITSVKNTHTSLNEKFKTGKDSPIEFALPQKIKDFFQPKDKNTLNKTLITVKNIKDTNNAGKKNISAEDVSKMNAAFMRKHIANQTCDYNYRMTGAAPLPGGVSVSANNRPTVSEGRTPPVSPSLSLQATSSPSSPADWAKKLTDAVLRQKAGEALTAADRDFSNADFRNITFSKILPPSFMERDGDIIKGFNFSNSKFTYSDISHLHFDECRFTYSTLSDVVCSNTKFSNSDMNEVFLQYSITTQQQPSFIDTTLKNTLIRHKANLSGVILNEPDNSSPPSVSGGGNFIRLGDIWLQMPLLWTENAVDGFLNHEHNNGKSILMTIDSLPDKYSQEKVQAMEDLVKSLRGGRLTEACIRPVESSLVSVLAHPPYTQSALISEWLGPVQERFFAHQCQTYNDVPLPAPDTYYQQRILPVLLDSFDRNSAAMTTHSGLFNQVILHCMTGVDCTDGTRQKAAALYEQYLAHPAVSPHIHNGLFGNYDGSPDWTTRAADNFLLLSSQDSDTAMMLSTDTLLTMLNPTPDTAWDNFYLLRAGENVSTAQISPVELFRHDFPVFLAAFNQQATQRRFGELIDIILSTEEHGELNQQFLAATNQKHSTVKLIDDASVSRLATIFDPLLPEGKLSPAHYQHILSAYHLTDATPQKQAETLFCLSTAFARYSSSAIFGTEHDSPPALRGYAEALMQKAWELSPAIFPSSEQFTEWSDRFHGLHGAFTCTSVVADSMQRHARKYFPSVLSSILPLAWA</sequence>
<gene>
    <name type="primary">sopA</name>
    <name type="ordered locus">STMMW_20971</name>
</gene>
<evidence type="ECO:0000250" key="1"/>
<evidence type="ECO:0000250" key="2">
    <source>
        <dbReference type="UniProtKB" id="Q8ZNR3"/>
    </source>
</evidence>
<evidence type="ECO:0000256" key="3">
    <source>
        <dbReference type="SAM" id="MobiDB-lite"/>
    </source>
</evidence>
<evidence type="ECO:0000305" key="4"/>
<keyword id="KW-0964">Secreted</keyword>
<keyword id="KW-0808">Transferase</keyword>
<keyword id="KW-0832">Ubl conjugation</keyword>
<keyword id="KW-0833">Ubl conjugation pathway</keyword>
<keyword id="KW-0843">Virulence</keyword>
<proteinExistence type="inferred from homology"/>
<feature type="chain" id="PRO_0000395857" description="E3 ubiquitin-protein ligase SopA">
    <location>
        <begin position="1"/>
        <end position="782"/>
    </location>
</feature>
<feature type="region of interest" description="Disordered" evidence="3">
    <location>
        <begin position="136"/>
        <end position="171"/>
    </location>
</feature>
<feature type="compositionally biased region" description="Low complexity" evidence="3">
    <location>
        <begin position="157"/>
        <end position="171"/>
    </location>
</feature>
<feature type="active site" description="Glycyl thioester intermediate" evidence="1">
    <location>
        <position position="753"/>
    </location>
</feature>
<name>SOPA_SALTD</name>
<protein>
    <recommendedName>
        <fullName>E3 ubiquitin-protein ligase SopA</fullName>
        <ecNumber>2.3.2.26</ecNumber>
    </recommendedName>
    <alternativeName>
        <fullName evidence="4">HECT-type E3 ubiquitin transferase SopA</fullName>
    </alternativeName>
    <alternativeName>
        <fullName>Salmonella outer protein A</fullName>
    </alternativeName>
    <alternativeName>
        <fullName>Secreted effector protein SopA</fullName>
    </alternativeName>
</protein>
<dbReference type="EC" id="2.3.2.26"/>
<dbReference type="EMBL" id="FN424405">
    <property type="protein sequence ID" value="CBG25106.1"/>
    <property type="molecule type" value="Genomic_DNA"/>
</dbReference>
<dbReference type="RefSeq" id="WP_000703995.1">
    <property type="nucleotide sequence ID" value="NC_016854.1"/>
</dbReference>
<dbReference type="SMR" id="C9X8K0"/>
<dbReference type="KEGG" id="sev:STMMW_20971"/>
<dbReference type="PATRIC" id="fig|568708.3.peg.2215"/>
<dbReference type="HOGENOM" id="CLU_026158_0_0_6"/>
<dbReference type="BioCyc" id="SENT568708:STMMW_RS10820-MONOMER"/>
<dbReference type="Proteomes" id="UP000002622">
    <property type="component" value="Chromosome"/>
</dbReference>
<dbReference type="GO" id="GO:0005576">
    <property type="term" value="C:extracellular region"/>
    <property type="evidence" value="ECO:0000250"/>
    <property type="project" value="UniProtKB"/>
</dbReference>
<dbReference type="GO" id="GO:0043657">
    <property type="term" value="C:host cell"/>
    <property type="evidence" value="ECO:0007669"/>
    <property type="project" value="UniProtKB-SubCell"/>
</dbReference>
<dbReference type="GO" id="GO:0004842">
    <property type="term" value="F:ubiquitin-protein transferase activity"/>
    <property type="evidence" value="ECO:0000250"/>
    <property type="project" value="UniProtKB"/>
</dbReference>
<dbReference type="GO" id="GO:0016567">
    <property type="term" value="P:protein ubiquitination"/>
    <property type="evidence" value="ECO:0000250"/>
    <property type="project" value="UniProtKB"/>
</dbReference>
<dbReference type="FunFam" id="1.25.40.300:FF:000001">
    <property type="entry name" value="SPI-1 type III secretion system effector HECT-type E3 ubiquitin transferase SopA"/>
    <property type="match status" value="1"/>
</dbReference>
<dbReference type="FunFam" id="2.160.20.80:FF:000005">
    <property type="entry name" value="SPI-1 type III secretion system effector HECT-type E3 ubiquitin transferase SopA"/>
    <property type="match status" value="1"/>
</dbReference>
<dbReference type="Gene3D" id="2.160.20.80">
    <property type="entry name" value="E3 ubiquitin-protein ligase SopA"/>
    <property type="match status" value="1"/>
</dbReference>
<dbReference type="Gene3D" id="1.10.4140.10">
    <property type="entry name" value="effector protein (NleL)"/>
    <property type="match status" value="1"/>
</dbReference>
<dbReference type="Gene3D" id="3.40.1850.10">
    <property type="entry name" value="HECT-like ubiquitin ligase"/>
    <property type="match status" value="1"/>
</dbReference>
<dbReference type="Gene3D" id="1.25.40.300">
    <property type="entry name" value="Putative secreted effector protein"/>
    <property type="match status" value="1"/>
</dbReference>
<dbReference type="InterPro" id="IPR025725">
    <property type="entry name" value="SopA-like_cat"/>
</dbReference>
<dbReference type="InterPro" id="IPR038270">
    <property type="entry name" value="SopA-like_catalytic_sf"/>
</dbReference>
<dbReference type="InterPro" id="IPR025726">
    <property type="entry name" value="SopA-like_central"/>
</dbReference>
<dbReference type="NCBIfam" id="NF011904">
    <property type="entry name" value="PRK15377.1"/>
    <property type="match status" value="1"/>
</dbReference>
<dbReference type="Pfam" id="PF13981">
    <property type="entry name" value="SopA"/>
    <property type="match status" value="1"/>
</dbReference>
<dbReference type="Pfam" id="PF13979">
    <property type="entry name" value="SopA_C"/>
    <property type="match status" value="1"/>
</dbReference>
<dbReference type="SUPFAM" id="SSF141571">
    <property type="entry name" value="Pentapeptide repeat-like"/>
    <property type="match status" value="1"/>
</dbReference>
<organism>
    <name type="scientific">Salmonella typhimurium (strain D23580)</name>
    <dbReference type="NCBI Taxonomy" id="568708"/>
    <lineage>
        <taxon>Bacteria</taxon>
        <taxon>Pseudomonadati</taxon>
        <taxon>Pseudomonadota</taxon>
        <taxon>Gammaproteobacteria</taxon>
        <taxon>Enterobacterales</taxon>
        <taxon>Enterobacteriaceae</taxon>
        <taxon>Salmonella</taxon>
    </lineage>
</organism>
<reference key="1">
    <citation type="journal article" date="2009" name="Genome Res.">
        <title>Epidemic multiple drug resistant Salmonella typhimurium causing invasive disease in sub-Saharan Africa have a distinct genotype.</title>
        <authorList>
            <person name="Kingsley R.A."/>
            <person name="Msefula C.L."/>
            <person name="Thomson N.R."/>
            <person name="Kariuki S."/>
            <person name="Holt K.E."/>
            <person name="Gordon M.A."/>
            <person name="Harris D."/>
            <person name="Clarke L."/>
            <person name="Whitehead S."/>
            <person name="Sangal V."/>
            <person name="Marsh K."/>
            <person name="Achtman M."/>
            <person name="Molyneux M.E."/>
            <person name="Cormican M."/>
            <person name="Parkhill J."/>
            <person name="Maclennan C.A."/>
            <person name="Heyderman R.S."/>
            <person name="Dougan G."/>
        </authorList>
    </citation>
    <scope>NUCLEOTIDE SEQUENCE [LARGE SCALE GENOMIC DNA]</scope>
    <source>
        <strain>D23580</strain>
    </source>
</reference>
<comment type="function">
    <text evidence="2">Effector proteins function to alter host cell physiology and promote bacterial survival in host tissues. This protein is an E3 ubiquitin ligase that interferes with host's ubiquitination pathway. For instance, prevents host innate immune response by ubiquitinating and thus sending to degradation host E3 ubiquitin ligases TRIM56 and TRIM65.</text>
</comment>
<comment type="catalytic activity">
    <reaction>
        <text>S-ubiquitinyl-[E2 ubiquitin-conjugating enzyme]-L-cysteine + [acceptor protein]-L-lysine = [E2 ubiquitin-conjugating enzyme]-L-cysteine + N(6)-ubiquitinyl-[acceptor protein]-L-lysine.</text>
        <dbReference type="EC" id="2.3.2.26"/>
    </reaction>
</comment>
<comment type="subcellular location">
    <subcellularLocation>
        <location evidence="2">Secreted</location>
    </subcellularLocation>
    <subcellularLocation>
        <location evidence="2">Host cell</location>
    </subcellularLocation>
    <text evidence="2">Secreted via type III secretion system 1 (SPI-1 T3SS), and delivered into the host cell.</text>
</comment>
<comment type="PTM">
    <text evidence="2">Ubiquitinated in the presence of host E1 ubiquitin-activating enzyme, E2 ubiquitin-conjugating enzyme and ubiquitin.</text>
</comment>
<comment type="similarity">
    <text evidence="4">Belongs to the SopA E3 ligase family.</text>
</comment>